<feature type="signal peptide" evidence="2">
    <location>
        <begin position="1"/>
        <end position="17"/>
    </location>
</feature>
<feature type="propeptide" id="PRO_0000027471" description="Activation peptide">
    <location>
        <begin position="18"/>
        <end position="19"/>
    </location>
</feature>
<feature type="chain" id="PRO_0000027472" description="Mast cell protease 3">
    <location>
        <begin position="20"/>
        <end position="251"/>
    </location>
</feature>
<feature type="domain" description="Peptidase S1" evidence="3">
    <location>
        <begin position="20"/>
        <end position="243"/>
    </location>
</feature>
<feature type="active site" description="Charge relay system" evidence="1">
    <location>
        <position position="63"/>
    </location>
</feature>
<feature type="active site" description="Charge relay system" evidence="1">
    <location>
        <position position="107"/>
    </location>
</feature>
<feature type="active site" description="Charge relay system" evidence="1">
    <location>
        <position position="201"/>
    </location>
</feature>
<feature type="glycosylation site" description="N-linked (GlcNAc...) asparagine" evidence="2">
    <location>
        <position position="70"/>
    </location>
</feature>
<feature type="disulfide bond" evidence="3">
    <location>
        <begin position="48"/>
        <end position="64"/>
    </location>
</feature>
<feature type="disulfide bond" evidence="3">
    <location>
        <begin position="141"/>
        <end position="207"/>
    </location>
</feature>
<feature type="disulfide bond" evidence="3">
    <location>
        <begin position="172"/>
        <end position="186"/>
    </location>
</feature>
<name>MCPT3_SHEEP</name>
<protein>
    <recommendedName>
        <fullName>Mast cell protease 3</fullName>
        <shortName>sMCP-3</shortName>
        <ecNumber>3.4.21.-</ecNumber>
    </recommendedName>
</protein>
<proteinExistence type="evidence at transcript level"/>
<accession>O46683</accession>
<dbReference type="EC" id="3.4.21.-"/>
<dbReference type="EMBL" id="Y13462">
    <property type="protein sequence ID" value="CAA73859.1"/>
    <property type="molecule type" value="mRNA"/>
</dbReference>
<dbReference type="PIR" id="T10262">
    <property type="entry name" value="T10262"/>
</dbReference>
<dbReference type="RefSeq" id="NP_001009411.1">
    <property type="nucleotide sequence ID" value="NM_001009411.2"/>
</dbReference>
<dbReference type="SMR" id="O46683"/>
<dbReference type="STRING" id="9940.ENSOARP00000004938"/>
<dbReference type="MEROPS" id="S01.142"/>
<dbReference type="PaxDb" id="9940-ENSOARP00000004938"/>
<dbReference type="Ensembl" id="ENSOART00215049432">
    <property type="protein sequence ID" value="ENSOARP00215025454"/>
    <property type="gene ID" value="ENSOARG00215029667"/>
</dbReference>
<dbReference type="Ensembl" id="ENSOART00220025090">
    <property type="protein sequence ID" value="ENSOARP00220013813"/>
    <property type="gene ID" value="ENSOARG00220015086"/>
</dbReference>
<dbReference type="Ensembl" id="ENSOART00225033159">
    <property type="protein sequence ID" value="ENSOARP00225016275"/>
    <property type="gene ID" value="ENSOARG00225020123"/>
</dbReference>
<dbReference type="GeneID" id="443429"/>
<dbReference type="KEGG" id="oas:443429"/>
<dbReference type="CTD" id="443429"/>
<dbReference type="eggNOG" id="KOG3627">
    <property type="taxonomic scope" value="Eukaryota"/>
</dbReference>
<dbReference type="OrthoDB" id="5565075at2759"/>
<dbReference type="Proteomes" id="UP000002356">
    <property type="component" value="Unplaced"/>
</dbReference>
<dbReference type="GO" id="GO:0005737">
    <property type="term" value="C:cytoplasm"/>
    <property type="evidence" value="ECO:0007669"/>
    <property type="project" value="TreeGrafter"/>
</dbReference>
<dbReference type="GO" id="GO:0005576">
    <property type="term" value="C:extracellular region"/>
    <property type="evidence" value="ECO:0007669"/>
    <property type="project" value="UniProtKB-SubCell"/>
</dbReference>
<dbReference type="GO" id="GO:0043231">
    <property type="term" value="C:intracellular membrane-bounded organelle"/>
    <property type="evidence" value="ECO:0007669"/>
    <property type="project" value="TreeGrafter"/>
</dbReference>
<dbReference type="GO" id="GO:0004252">
    <property type="term" value="F:serine-type endopeptidase activity"/>
    <property type="evidence" value="ECO:0007669"/>
    <property type="project" value="InterPro"/>
</dbReference>
<dbReference type="GO" id="GO:0006508">
    <property type="term" value="P:proteolysis"/>
    <property type="evidence" value="ECO:0007669"/>
    <property type="project" value="UniProtKB-KW"/>
</dbReference>
<dbReference type="CDD" id="cd00190">
    <property type="entry name" value="Tryp_SPc"/>
    <property type="match status" value="1"/>
</dbReference>
<dbReference type="FunFam" id="2.40.10.10:FF:000014">
    <property type="entry name" value="Complement factor D"/>
    <property type="match status" value="1"/>
</dbReference>
<dbReference type="FunFam" id="2.40.10.10:FF:000068">
    <property type="entry name" value="transmembrane protease serine 2"/>
    <property type="match status" value="1"/>
</dbReference>
<dbReference type="Gene3D" id="2.40.10.10">
    <property type="entry name" value="Trypsin-like serine proteases"/>
    <property type="match status" value="2"/>
</dbReference>
<dbReference type="InterPro" id="IPR009003">
    <property type="entry name" value="Peptidase_S1_PA"/>
</dbReference>
<dbReference type="InterPro" id="IPR043504">
    <property type="entry name" value="Peptidase_S1_PA_chymotrypsin"/>
</dbReference>
<dbReference type="InterPro" id="IPR001314">
    <property type="entry name" value="Peptidase_S1A"/>
</dbReference>
<dbReference type="InterPro" id="IPR001254">
    <property type="entry name" value="Trypsin_dom"/>
</dbReference>
<dbReference type="InterPro" id="IPR018114">
    <property type="entry name" value="TRYPSIN_HIS"/>
</dbReference>
<dbReference type="InterPro" id="IPR033116">
    <property type="entry name" value="TRYPSIN_SER"/>
</dbReference>
<dbReference type="PANTHER" id="PTHR24271:SF58">
    <property type="entry name" value="DUODENASE-1"/>
    <property type="match status" value="1"/>
</dbReference>
<dbReference type="PANTHER" id="PTHR24271">
    <property type="entry name" value="KALLIKREIN-RELATED"/>
    <property type="match status" value="1"/>
</dbReference>
<dbReference type="Pfam" id="PF00089">
    <property type="entry name" value="Trypsin"/>
    <property type="match status" value="1"/>
</dbReference>
<dbReference type="PRINTS" id="PR00722">
    <property type="entry name" value="CHYMOTRYPSIN"/>
</dbReference>
<dbReference type="SMART" id="SM00020">
    <property type="entry name" value="Tryp_SPc"/>
    <property type="match status" value="1"/>
</dbReference>
<dbReference type="SUPFAM" id="SSF50494">
    <property type="entry name" value="Trypsin-like serine proteases"/>
    <property type="match status" value="1"/>
</dbReference>
<dbReference type="PROSITE" id="PS50240">
    <property type="entry name" value="TRYPSIN_DOM"/>
    <property type="match status" value="1"/>
</dbReference>
<dbReference type="PROSITE" id="PS00134">
    <property type="entry name" value="TRYPSIN_HIS"/>
    <property type="match status" value="1"/>
</dbReference>
<dbReference type="PROSITE" id="PS00135">
    <property type="entry name" value="TRYPSIN_SER"/>
    <property type="match status" value="1"/>
</dbReference>
<comment type="subcellular location">
    <subcellularLocation>
        <location>Secreted</location>
    </subcellularLocation>
    <subcellularLocation>
        <location>Cytoplasmic granule</location>
    </subcellularLocation>
    <text>Secretory granules.</text>
</comment>
<comment type="similarity">
    <text evidence="3">Belongs to the peptidase S1 family. Granzyme subfamily.</text>
</comment>
<reference key="1">
    <citation type="journal article" date="1998" name="Biochem. J.">
        <title>Sheep mast-cell proteinases-1 and -3: cDNA cloning, primary structure and molecular modelling of the enzymes and further studies on substrate specificity.</title>
        <authorList>
            <person name="McAleese S.M."/>
            <person name="Pemberton A.D."/>
            <person name="McGrath M.E."/>
            <person name="Huntley J.F."/>
            <person name="Miller H.R.P."/>
        </authorList>
    </citation>
    <scope>NUCLEOTIDE SEQUENCE [MRNA]</scope>
    <source>
        <tissue>Bone marrow</tissue>
    </source>
</reference>
<organism>
    <name type="scientific">Ovis aries</name>
    <name type="common">Sheep</name>
    <dbReference type="NCBI Taxonomy" id="9940"/>
    <lineage>
        <taxon>Eukaryota</taxon>
        <taxon>Metazoa</taxon>
        <taxon>Chordata</taxon>
        <taxon>Craniata</taxon>
        <taxon>Vertebrata</taxon>
        <taxon>Euteleostomi</taxon>
        <taxon>Mammalia</taxon>
        <taxon>Eutheria</taxon>
        <taxon>Laurasiatheria</taxon>
        <taxon>Artiodactyla</taxon>
        <taxon>Ruminantia</taxon>
        <taxon>Pecora</taxon>
        <taxon>Bovidae</taxon>
        <taxon>Caprinae</taxon>
        <taxon>Ovis</taxon>
    </lineage>
</organism>
<keyword id="KW-1015">Disulfide bond</keyword>
<keyword id="KW-0325">Glycoprotein</keyword>
<keyword id="KW-0378">Hydrolase</keyword>
<keyword id="KW-0645">Protease</keyword>
<keyword id="KW-1185">Reference proteome</keyword>
<keyword id="KW-0964">Secreted</keyword>
<keyword id="KW-0720">Serine protease</keyword>
<keyword id="KW-0732">Signal</keyword>
<keyword id="KW-0865">Zymogen</keyword>
<sequence>MVLFLLLVALLSPAGEAGKIIGGHEAKPHSRPYMAFLQFKISGKSYICGGFLVREDFVLTAAHCLGSSINVTLGAHTITDQERTQQVIQVRRAIPHPDYNDETCANDIMLLQLTRKAEMTDAVSLINLPRSLEKVKPGMMCSVAGWGQLGVNMPSADKLQEVDLEVQREEKCIARFKDYIPVTQICAGDPSKRKDSFLGDSGGPLVCDGVAQGIVSYGKDDGTTPNVYTRISSFLSWIQRTMRQYKNQGSA</sequence>
<evidence type="ECO:0000250" key="1"/>
<evidence type="ECO:0000255" key="2"/>
<evidence type="ECO:0000255" key="3">
    <source>
        <dbReference type="PROSITE-ProRule" id="PRU00274"/>
    </source>
</evidence>